<keyword id="KW-0963">Cytoplasm</keyword>
<keyword id="KW-0521">NADP</keyword>
<keyword id="KW-0560">Oxidoreductase</keyword>
<keyword id="KW-0671">Queuosine biosynthesis</keyword>
<keyword id="KW-1185">Reference proteome</keyword>
<comment type="function">
    <text evidence="1">Catalyzes the NADPH-dependent reduction of 7-cyano-7-deazaguanine (preQ0) to 7-aminomethyl-7-deazaguanine (preQ1).</text>
</comment>
<comment type="catalytic activity">
    <reaction evidence="1">
        <text>7-aminomethyl-7-carbaguanine + 2 NADP(+) = 7-cyano-7-deazaguanine + 2 NADPH + 3 H(+)</text>
        <dbReference type="Rhea" id="RHEA:13409"/>
        <dbReference type="ChEBI" id="CHEBI:15378"/>
        <dbReference type="ChEBI" id="CHEBI:45075"/>
        <dbReference type="ChEBI" id="CHEBI:57783"/>
        <dbReference type="ChEBI" id="CHEBI:58349"/>
        <dbReference type="ChEBI" id="CHEBI:58703"/>
        <dbReference type="EC" id="1.7.1.13"/>
    </reaction>
</comment>
<comment type="pathway">
    <text evidence="1">tRNA modification; tRNA-queuosine biosynthesis.</text>
</comment>
<comment type="subunit">
    <text evidence="1">Homodimer.</text>
</comment>
<comment type="subcellular location">
    <subcellularLocation>
        <location evidence="1">Cytoplasm</location>
    </subcellularLocation>
</comment>
<comment type="similarity">
    <text evidence="1">Belongs to the GTP cyclohydrolase I family. QueF type 2 subfamily.</text>
</comment>
<proteinExistence type="inferred from homology"/>
<feature type="chain" id="PRO_1000213055" description="NADPH-dependent 7-cyano-7-deazaguanine reductase">
    <location>
        <begin position="1"/>
        <end position="282"/>
    </location>
</feature>
<feature type="active site" description="Thioimide intermediate" evidence="1">
    <location>
        <position position="190"/>
    </location>
</feature>
<feature type="active site" description="Proton donor" evidence="1">
    <location>
        <position position="197"/>
    </location>
</feature>
<feature type="binding site" evidence="1">
    <location>
        <begin position="88"/>
        <end position="90"/>
    </location>
    <ligand>
        <name>substrate</name>
    </ligand>
</feature>
<feature type="binding site" evidence="1">
    <location>
        <begin position="90"/>
        <end position="91"/>
    </location>
    <ligand>
        <name>NADPH</name>
        <dbReference type="ChEBI" id="CHEBI:57783"/>
    </ligand>
</feature>
<feature type="binding site" evidence="1">
    <location>
        <begin position="229"/>
        <end position="230"/>
    </location>
    <ligand>
        <name>substrate</name>
    </ligand>
</feature>
<feature type="binding site" evidence="1">
    <location>
        <begin position="258"/>
        <end position="259"/>
    </location>
    <ligand>
        <name>NADPH</name>
        <dbReference type="ChEBI" id="CHEBI:57783"/>
    </ligand>
</feature>
<name>QUEF_ECO27</name>
<gene>
    <name evidence="1" type="primary">queF</name>
    <name type="ordered locus">E2348C_3061</name>
</gene>
<organism>
    <name type="scientific">Escherichia coli O127:H6 (strain E2348/69 / EPEC)</name>
    <dbReference type="NCBI Taxonomy" id="574521"/>
    <lineage>
        <taxon>Bacteria</taxon>
        <taxon>Pseudomonadati</taxon>
        <taxon>Pseudomonadota</taxon>
        <taxon>Gammaproteobacteria</taxon>
        <taxon>Enterobacterales</taxon>
        <taxon>Enterobacteriaceae</taxon>
        <taxon>Escherichia</taxon>
    </lineage>
</organism>
<dbReference type="EC" id="1.7.1.13" evidence="1"/>
<dbReference type="EMBL" id="FM180568">
    <property type="protein sequence ID" value="CAS10609.1"/>
    <property type="molecule type" value="Genomic_DNA"/>
</dbReference>
<dbReference type="RefSeq" id="WP_000100424.1">
    <property type="nucleotide sequence ID" value="NC_011601.1"/>
</dbReference>
<dbReference type="SMR" id="B7UHL0"/>
<dbReference type="KEGG" id="ecg:E2348C_3061"/>
<dbReference type="HOGENOM" id="CLU_054738_0_0_6"/>
<dbReference type="UniPathway" id="UPA00392"/>
<dbReference type="Proteomes" id="UP000008205">
    <property type="component" value="Chromosome"/>
</dbReference>
<dbReference type="GO" id="GO:0005737">
    <property type="term" value="C:cytoplasm"/>
    <property type="evidence" value="ECO:0007669"/>
    <property type="project" value="UniProtKB-SubCell"/>
</dbReference>
<dbReference type="GO" id="GO:0033739">
    <property type="term" value="F:preQ1 synthase activity"/>
    <property type="evidence" value="ECO:0007669"/>
    <property type="project" value="UniProtKB-UniRule"/>
</dbReference>
<dbReference type="GO" id="GO:0008616">
    <property type="term" value="P:queuosine biosynthetic process"/>
    <property type="evidence" value="ECO:0007669"/>
    <property type="project" value="UniProtKB-UniRule"/>
</dbReference>
<dbReference type="GO" id="GO:0006400">
    <property type="term" value="P:tRNA modification"/>
    <property type="evidence" value="ECO:0007669"/>
    <property type="project" value="UniProtKB-UniRule"/>
</dbReference>
<dbReference type="FunFam" id="3.30.1130.10:FF:000004">
    <property type="entry name" value="NADPH-dependent 7-cyano-7-deazaguanine reductase"/>
    <property type="match status" value="1"/>
</dbReference>
<dbReference type="FunFam" id="3.30.1130.10:FF:000006">
    <property type="entry name" value="NADPH-dependent 7-cyano-7-deazaguanine reductase"/>
    <property type="match status" value="1"/>
</dbReference>
<dbReference type="Gene3D" id="3.30.1130.10">
    <property type="match status" value="2"/>
</dbReference>
<dbReference type="HAMAP" id="MF_00817">
    <property type="entry name" value="QueF_type2"/>
    <property type="match status" value="1"/>
</dbReference>
<dbReference type="InterPro" id="IPR043133">
    <property type="entry name" value="GTP-CH-I_C/QueF"/>
</dbReference>
<dbReference type="InterPro" id="IPR050084">
    <property type="entry name" value="NADPH_dep_7-cyano-7-deazaG_red"/>
</dbReference>
<dbReference type="InterPro" id="IPR029500">
    <property type="entry name" value="QueF"/>
</dbReference>
<dbReference type="InterPro" id="IPR029139">
    <property type="entry name" value="QueF_N"/>
</dbReference>
<dbReference type="InterPro" id="IPR016428">
    <property type="entry name" value="QueF_type2"/>
</dbReference>
<dbReference type="NCBIfam" id="TIGR03138">
    <property type="entry name" value="QueF"/>
    <property type="match status" value="1"/>
</dbReference>
<dbReference type="PANTHER" id="PTHR34354">
    <property type="entry name" value="NADPH-DEPENDENT 7-CYANO-7-DEAZAGUANINE REDUCTASE"/>
    <property type="match status" value="1"/>
</dbReference>
<dbReference type="PANTHER" id="PTHR34354:SF1">
    <property type="entry name" value="NADPH-DEPENDENT 7-CYANO-7-DEAZAGUANINE REDUCTASE"/>
    <property type="match status" value="1"/>
</dbReference>
<dbReference type="Pfam" id="PF14489">
    <property type="entry name" value="QueF"/>
    <property type="match status" value="1"/>
</dbReference>
<dbReference type="Pfam" id="PF14819">
    <property type="entry name" value="QueF_N"/>
    <property type="match status" value="1"/>
</dbReference>
<dbReference type="PIRSF" id="PIRSF004750">
    <property type="entry name" value="Nitrile_oxidored_YqcD_prd"/>
    <property type="match status" value="1"/>
</dbReference>
<dbReference type="SUPFAM" id="SSF55620">
    <property type="entry name" value="Tetrahydrobiopterin biosynthesis enzymes-like"/>
    <property type="match status" value="1"/>
</dbReference>
<protein>
    <recommendedName>
        <fullName evidence="1">NADPH-dependent 7-cyano-7-deazaguanine reductase</fullName>
        <ecNumber evidence="1">1.7.1.13</ecNumber>
    </recommendedName>
    <alternativeName>
        <fullName evidence="1">7-cyano-7-carbaguanine reductase</fullName>
    </alternativeName>
    <alternativeName>
        <fullName evidence="1">NADPH-dependent nitrile oxidoreductase</fullName>
    </alternativeName>
    <alternativeName>
        <fullName evidence="1">PreQ(0) reductase</fullName>
    </alternativeName>
</protein>
<evidence type="ECO:0000255" key="1">
    <source>
        <dbReference type="HAMAP-Rule" id="MF_00817"/>
    </source>
</evidence>
<sequence>MSSYANHQALAGLTLGKSTDYRDTYDASLLQGVPRSLNRDPLGLKADNLPFHGTDIWTLYELSWLNAKGLPQVAVGHVELDYTSVNLIESKSFKLYLNSFNQTRFNNWDEVRQTLERDLSTCAQGKVSVALYRLDELEGQPIGHFNGTCIDDQDITIDNDEFTTDYLENATSGEKVVEETLVSHLLKSNCLITHQPDWGSIQIQYRGRQIDREKLLRYLVSFRHHNEFHEQCVERIFNDLLRFCQPEKLSVYARYTRRGGLDINPWRSNNDFVPSTTRLVRQ</sequence>
<accession>B7UHL0</accession>
<reference key="1">
    <citation type="journal article" date="2009" name="J. Bacteriol.">
        <title>Complete genome sequence and comparative genome analysis of enteropathogenic Escherichia coli O127:H6 strain E2348/69.</title>
        <authorList>
            <person name="Iguchi A."/>
            <person name="Thomson N.R."/>
            <person name="Ogura Y."/>
            <person name="Saunders D."/>
            <person name="Ooka T."/>
            <person name="Henderson I.R."/>
            <person name="Harris D."/>
            <person name="Asadulghani M."/>
            <person name="Kurokawa K."/>
            <person name="Dean P."/>
            <person name="Kenny B."/>
            <person name="Quail M.A."/>
            <person name="Thurston S."/>
            <person name="Dougan G."/>
            <person name="Hayashi T."/>
            <person name="Parkhill J."/>
            <person name="Frankel G."/>
        </authorList>
    </citation>
    <scope>NUCLEOTIDE SEQUENCE [LARGE SCALE GENOMIC DNA]</scope>
    <source>
        <strain>E2348/69 / EPEC</strain>
    </source>
</reference>